<protein>
    <recommendedName>
        <fullName evidence="1">tRNA modification GTPase MnmE</fullName>
        <ecNumber evidence="1">3.6.-.-</ecNumber>
    </recommendedName>
</protein>
<sequence length="453" mass="49208">MTTDTIVAQATAPGRGGVGIIRISGDKATDVAMAVLGHLPKTRYADYCDFKNATGQVIDQGIALFFKGPNSFTGEDVLELQGHGGQIVLDMLIKRVLEVEGIRIAKPGEFSEQAFMNDKLDLTQAEAIADLIDATSEQAAKSALQSLQGEFSKEVHELVDQVTNLRLYVEAAIDFPDEEVDFLSDGKIANALYKIIDKLSTVQASAKQGSIIREGMKVVIAGRPNAGKSSLLNALAGKESAIVTEIAGTTRDVLREHIHLDGMPLHIIDTAGLRDTTDTVEQIGIERAWNEINSADRVLFMVDGTTTDAVDPHDIWPDFINRLPANLGVTVIRNKADLTGENLDMTEEKGYSVYRISAKTGLGVDELKLHLKSLMGYQSNLEGGFIARRRHLEALDVAASHLQLGKEQLEVYLAGELLAEELRMAQIALSEITGRFTSDDLLGKIFSSFCIGK</sequence>
<proteinExistence type="inferred from homology"/>
<feature type="chain" id="PRO_1000060057" description="tRNA modification GTPase MnmE">
    <location>
        <begin position="1"/>
        <end position="453"/>
    </location>
</feature>
<feature type="domain" description="TrmE-type G">
    <location>
        <begin position="215"/>
        <end position="376"/>
    </location>
</feature>
<feature type="binding site" evidence="1">
    <location>
        <position position="22"/>
    </location>
    <ligand>
        <name>(6S)-5-formyl-5,6,7,8-tetrahydrofolate</name>
        <dbReference type="ChEBI" id="CHEBI:57457"/>
    </ligand>
</feature>
<feature type="binding site" evidence="1">
    <location>
        <position position="79"/>
    </location>
    <ligand>
        <name>(6S)-5-formyl-5,6,7,8-tetrahydrofolate</name>
        <dbReference type="ChEBI" id="CHEBI:57457"/>
    </ligand>
</feature>
<feature type="binding site" evidence="1">
    <location>
        <position position="119"/>
    </location>
    <ligand>
        <name>(6S)-5-formyl-5,6,7,8-tetrahydrofolate</name>
        <dbReference type="ChEBI" id="CHEBI:57457"/>
    </ligand>
</feature>
<feature type="binding site" evidence="1">
    <location>
        <begin position="225"/>
        <end position="230"/>
    </location>
    <ligand>
        <name>GTP</name>
        <dbReference type="ChEBI" id="CHEBI:37565"/>
    </ligand>
</feature>
<feature type="binding site" evidence="1">
    <location>
        <position position="225"/>
    </location>
    <ligand>
        <name>K(+)</name>
        <dbReference type="ChEBI" id="CHEBI:29103"/>
    </ligand>
</feature>
<feature type="binding site" evidence="1">
    <location>
        <position position="229"/>
    </location>
    <ligand>
        <name>Mg(2+)</name>
        <dbReference type="ChEBI" id="CHEBI:18420"/>
    </ligand>
</feature>
<feature type="binding site" evidence="1">
    <location>
        <begin position="244"/>
        <end position="250"/>
    </location>
    <ligand>
        <name>GTP</name>
        <dbReference type="ChEBI" id="CHEBI:37565"/>
    </ligand>
</feature>
<feature type="binding site" evidence="1">
    <location>
        <position position="244"/>
    </location>
    <ligand>
        <name>K(+)</name>
        <dbReference type="ChEBI" id="CHEBI:29103"/>
    </ligand>
</feature>
<feature type="binding site" evidence="1">
    <location>
        <position position="246"/>
    </location>
    <ligand>
        <name>K(+)</name>
        <dbReference type="ChEBI" id="CHEBI:29103"/>
    </ligand>
</feature>
<feature type="binding site" evidence="1">
    <location>
        <position position="249"/>
    </location>
    <ligand>
        <name>K(+)</name>
        <dbReference type="ChEBI" id="CHEBI:29103"/>
    </ligand>
</feature>
<feature type="binding site" evidence="1">
    <location>
        <position position="250"/>
    </location>
    <ligand>
        <name>Mg(2+)</name>
        <dbReference type="ChEBI" id="CHEBI:18420"/>
    </ligand>
</feature>
<feature type="binding site" evidence="1">
    <location>
        <begin position="269"/>
        <end position="272"/>
    </location>
    <ligand>
        <name>GTP</name>
        <dbReference type="ChEBI" id="CHEBI:37565"/>
    </ligand>
</feature>
<feature type="binding site" evidence="1">
    <location>
        <begin position="334"/>
        <end position="337"/>
    </location>
    <ligand>
        <name>GTP</name>
        <dbReference type="ChEBI" id="CHEBI:37565"/>
    </ligand>
</feature>
<feature type="binding site" evidence="1">
    <location>
        <position position="453"/>
    </location>
    <ligand>
        <name>(6S)-5-formyl-5,6,7,8-tetrahydrofolate</name>
        <dbReference type="ChEBI" id="CHEBI:57457"/>
    </ligand>
</feature>
<name>MNME_SHESW</name>
<accession>A1RQE8</accession>
<reference key="1">
    <citation type="submission" date="2006-12" db="EMBL/GenBank/DDBJ databases">
        <title>Complete sequence of Shewanella sp. W3-18-1.</title>
        <authorList>
            <consortium name="US DOE Joint Genome Institute"/>
            <person name="Copeland A."/>
            <person name="Lucas S."/>
            <person name="Lapidus A."/>
            <person name="Barry K."/>
            <person name="Detter J.C."/>
            <person name="Glavina del Rio T."/>
            <person name="Hammon N."/>
            <person name="Israni S."/>
            <person name="Dalin E."/>
            <person name="Tice H."/>
            <person name="Pitluck S."/>
            <person name="Chain P."/>
            <person name="Malfatti S."/>
            <person name="Shin M."/>
            <person name="Vergez L."/>
            <person name="Schmutz J."/>
            <person name="Larimer F."/>
            <person name="Land M."/>
            <person name="Hauser L."/>
            <person name="Kyrpides N."/>
            <person name="Lykidis A."/>
            <person name="Tiedje J."/>
            <person name="Richardson P."/>
        </authorList>
    </citation>
    <scope>NUCLEOTIDE SEQUENCE [LARGE SCALE GENOMIC DNA]</scope>
    <source>
        <strain>W3-18-1</strain>
    </source>
</reference>
<gene>
    <name evidence="1" type="primary">mnmE</name>
    <name evidence="1" type="synonym">trmE</name>
    <name type="ordered locus">Sputw3181_4091</name>
</gene>
<keyword id="KW-0963">Cytoplasm</keyword>
<keyword id="KW-0342">GTP-binding</keyword>
<keyword id="KW-0378">Hydrolase</keyword>
<keyword id="KW-0460">Magnesium</keyword>
<keyword id="KW-0479">Metal-binding</keyword>
<keyword id="KW-0547">Nucleotide-binding</keyword>
<keyword id="KW-0630">Potassium</keyword>
<keyword id="KW-0819">tRNA processing</keyword>
<comment type="function">
    <text evidence="1">Exhibits a very high intrinsic GTPase hydrolysis rate. Involved in the addition of a carboxymethylaminomethyl (cmnm) group at the wobble position (U34) of certain tRNAs, forming tRNA-cmnm(5)s(2)U34.</text>
</comment>
<comment type="cofactor">
    <cofactor evidence="1">
        <name>K(+)</name>
        <dbReference type="ChEBI" id="CHEBI:29103"/>
    </cofactor>
    <text evidence="1">Binds 1 potassium ion per subunit.</text>
</comment>
<comment type="subunit">
    <text evidence="1">Homodimer. Heterotetramer of two MnmE and two MnmG subunits.</text>
</comment>
<comment type="subcellular location">
    <subcellularLocation>
        <location evidence="1">Cytoplasm</location>
    </subcellularLocation>
</comment>
<comment type="similarity">
    <text evidence="1">Belongs to the TRAFAC class TrmE-Era-EngA-EngB-Septin-like GTPase superfamily. TrmE GTPase family.</text>
</comment>
<dbReference type="EC" id="3.6.-.-" evidence="1"/>
<dbReference type="EMBL" id="CP000503">
    <property type="protein sequence ID" value="ABM26893.1"/>
    <property type="molecule type" value="Genomic_DNA"/>
</dbReference>
<dbReference type="RefSeq" id="WP_011791312.1">
    <property type="nucleotide sequence ID" value="NC_008750.1"/>
</dbReference>
<dbReference type="SMR" id="A1RQE8"/>
<dbReference type="GeneID" id="67445479"/>
<dbReference type="KEGG" id="shw:Sputw3181_4091"/>
<dbReference type="HOGENOM" id="CLU_019624_4_1_6"/>
<dbReference type="Proteomes" id="UP000002597">
    <property type="component" value="Chromosome"/>
</dbReference>
<dbReference type="GO" id="GO:0005829">
    <property type="term" value="C:cytosol"/>
    <property type="evidence" value="ECO:0007669"/>
    <property type="project" value="TreeGrafter"/>
</dbReference>
<dbReference type="GO" id="GO:0005525">
    <property type="term" value="F:GTP binding"/>
    <property type="evidence" value="ECO:0007669"/>
    <property type="project" value="UniProtKB-UniRule"/>
</dbReference>
<dbReference type="GO" id="GO:0003924">
    <property type="term" value="F:GTPase activity"/>
    <property type="evidence" value="ECO:0007669"/>
    <property type="project" value="UniProtKB-UniRule"/>
</dbReference>
<dbReference type="GO" id="GO:0046872">
    <property type="term" value="F:metal ion binding"/>
    <property type="evidence" value="ECO:0007669"/>
    <property type="project" value="UniProtKB-KW"/>
</dbReference>
<dbReference type="GO" id="GO:0030488">
    <property type="term" value="P:tRNA methylation"/>
    <property type="evidence" value="ECO:0007669"/>
    <property type="project" value="TreeGrafter"/>
</dbReference>
<dbReference type="GO" id="GO:0002098">
    <property type="term" value="P:tRNA wobble uridine modification"/>
    <property type="evidence" value="ECO:0007669"/>
    <property type="project" value="TreeGrafter"/>
</dbReference>
<dbReference type="CDD" id="cd04164">
    <property type="entry name" value="trmE"/>
    <property type="match status" value="1"/>
</dbReference>
<dbReference type="CDD" id="cd14858">
    <property type="entry name" value="TrmE_N"/>
    <property type="match status" value="1"/>
</dbReference>
<dbReference type="FunFam" id="3.30.1360.120:FF:000001">
    <property type="entry name" value="tRNA modification GTPase MnmE"/>
    <property type="match status" value="1"/>
</dbReference>
<dbReference type="FunFam" id="3.40.50.300:FF:000249">
    <property type="entry name" value="tRNA modification GTPase MnmE"/>
    <property type="match status" value="1"/>
</dbReference>
<dbReference type="Gene3D" id="3.40.50.300">
    <property type="entry name" value="P-loop containing nucleotide triphosphate hydrolases"/>
    <property type="match status" value="1"/>
</dbReference>
<dbReference type="Gene3D" id="3.30.1360.120">
    <property type="entry name" value="Probable tRNA modification gtpase trme, domain 1"/>
    <property type="match status" value="1"/>
</dbReference>
<dbReference type="Gene3D" id="1.20.120.430">
    <property type="entry name" value="tRNA modification GTPase MnmE domain 2"/>
    <property type="match status" value="1"/>
</dbReference>
<dbReference type="HAMAP" id="MF_00379">
    <property type="entry name" value="GTPase_MnmE"/>
    <property type="match status" value="1"/>
</dbReference>
<dbReference type="InterPro" id="IPR031168">
    <property type="entry name" value="G_TrmE"/>
</dbReference>
<dbReference type="InterPro" id="IPR006073">
    <property type="entry name" value="GTP-bd"/>
</dbReference>
<dbReference type="InterPro" id="IPR018948">
    <property type="entry name" value="GTP-bd_TrmE_N"/>
</dbReference>
<dbReference type="InterPro" id="IPR004520">
    <property type="entry name" value="GTPase_MnmE"/>
</dbReference>
<dbReference type="InterPro" id="IPR027368">
    <property type="entry name" value="MnmE_dom2"/>
</dbReference>
<dbReference type="InterPro" id="IPR025867">
    <property type="entry name" value="MnmE_helical"/>
</dbReference>
<dbReference type="InterPro" id="IPR027417">
    <property type="entry name" value="P-loop_NTPase"/>
</dbReference>
<dbReference type="InterPro" id="IPR005225">
    <property type="entry name" value="Small_GTP-bd"/>
</dbReference>
<dbReference type="InterPro" id="IPR027266">
    <property type="entry name" value="TrmE/GcvT_dom1"/>
</dbReference>
<dbReference type="NCBIfam" id="TIGR00450">
    <property type="entry name" value="mnmE_trmE_thdF"/>
    <property type="match status" value="1"/>
</dbReference>
<dbReference type="NCBIfam" id="NF003661">
    <property type="entry name" value="PRK05291.1-3"/>
    <property type="match status" value="1"/>
</dbReference>
<dbReference type="NCBIfam" id="TIGR00231">
    <property type="entry name" value="small_GTP"/>
    <property type="match status" value="1"/>
</dbReference>
<dbReference type="PANTHER" id="PTHR42714">
    <property type="entry name" value="TRNA MODIFICATION GTPASE GTPBP3"/>
    <property type="match status" value="1"/>
</dbReference>
<dbReference type="PANTHER" id="PTHR42714:SF2">
    <property type="entry name" value="TRNA MODIFICATION GTPASE GTPBP3, MITOCHONDRIAL"/>
    <property type="match status" value="1"/>
</dbReference>
<dbReference type="Pfam" id="PF01926">
    <property type="entry name" value="MMR_HSR1"/>
    <property type="match status" value="1"/>
</dbReference>
<dbReference type="Pfam" id="PF12631">
    <property type="entry name" value="MnmE_helical"/>
    <property type="match status" value="1"/>
</dbReference>
<dbReference type="Pfam" id="PF10396">
    <property type="entry name" value="TrmE_N"/>
    <property type="match status" value="1"/>
</dbReference>
<dbReference type="SUPFAM" id="SSF52540">
    <property type="entry name" value="P-loop containing nucleoside triphosphate hydrolases"/>
    <property type="match status" value="1"/>
</dbReference>
<dbReference type="SUPFAM" id="SSF116878">
    <property type="entry name" value="TrmE connector domain"/>
    <property type="match status" value="1"/>
</dbReference>
<dbReference type="PROSITE" id="PS51709">
    <property type="entry name" value="G_TRME"/>
    <property type="match status" value="1"/>
</dbReference>
<evidence type="ECO:0000255" key="1">
    <source>
        <dbReference type="HAMAP-Rule" id="MF_00379"/>
    </source>
</evidence>
<organism>
    <name type="scientific">Shewanella sp. (strain W3-18-1)</name>
    <dbReference type="NCBI Taxonomy" id="351745"/>
    <lineage>
        <taxon>Bacteria</taxon>
        <taxon>Pseudomonadati</taxon>
        <taxon>Pseudomonadota</taxon>
        <taxon>Gammaproteobacteria</taxon>
        <taxon>Alteromonadales</taxon>
        <taxon>Shewanellaceae</taxon>
        <taxon>Shewanella</taxon>
    </lineage>
</organism>